<organism>
    <name type="scientific">Histophilus somni (strain 2336)</name>
    <name type="common">Haemophilus somnus</name>
    <dbReference type="NCBI Taxonomy" id="228400"/>
    <lineage>
        <taxon>Bacteria</taxon>
        <taxon>Pseudomonadati</taxon>
        <taxon>Pseudomonadota</taxon>
        <taxon>Gammaproteobacteria</taxon>
        <taxon>Pasteurellales</taxon>
        <taxon>Pasteurellaceae</taxon>
        <taxon>Histophilus</taxon>
    </lineage>
</organism>
<dbReference type="EC" id="6.1.1.17" evidence="1"/>
<dbReference type="EMBL" id="CP000947">
    <property type="protein sequence ID" value="ACA32423.1"/>
    <property type="molecule type" value="Genomic_DNA"/>
</dbReference>
<dbReference type="RefSeq" id="WP_012341580.1">
    <property type="nucleotide sequence ID" value="NC_010519.1"/>
</dbReference>
<dbReference type="SMR" id="B0USJ3"/>
<dbReference type="STRING" id="228400.HSM_0754"/>
<dbReference type="GeneID" id="31487041"/>
<dbReference type="KEGG" id="hsm:HSM_0754"/>
<dbReference type="HOGENOM" id="CLU_015768_6_3_6"/>
<dbReference type="GO" id="GO:0005829">
    <property type="term" value="C:cytosol"/>
    <property type="evidence" value="ECO:0007669"/>
    <property type="project" value="TreeGrafter"/>
</dbReference>
<dbReference type="GO" id="GO:0005524">
    <property type="term" value="F:ATP binding"/>
    <property type="evidence" value="ECO:0007669"/>
    <property type="project" value="UniProtKB-UniRule"/>
</dbReference>
<dbReference type="GO" id="GO:0004818">
    <property type="term" value="F:glutamate-tRNA ligase activity"/>
    <property type="evidence" value="ECO:0007669"/>
    <property type="project" value="UniProtKB-UniRule"/>
</dbReference>
<dbReference type="GO" id="GO:0000049">
    <property type="term" value="F:tRNA binding"/>
    <property type="evidence" value="ECO:0007669"/>
    <property type="project" value="InterPro"/>
</dbReference>
<dbReference type="GO" id="GO:0008270">
    <property type="term" value="F:zinc ion binding"/>
    <property type="evidence" value="ECO:0007669"/>
    <property type="project" value="InterPro"/>
</dbReference>
<dbReference type="GO" id="GO:0006424">
    <property type="term" value="P:glutamyl-tRNA aminoacylation"/>
    <property type="evidence" value="ECO:0007669"/>
    <property type="project" value="UniProtKB-UniRule"/>
</dbReference>
<dbReference type="CDD" id="cd00808">
    <property type="entry name" value="GluRS_core"/>
    <property type="match status" value="1"/>
</dbReference>
<dbReference type="FunFam" id="3.40.50.620:FF:000007">
    <property type="entry name" value="Glutamate--tRNA ligase"/>
    <property type="match status" value="1"/>
</dbReference>
<dbReference type="Gene3D" id="1.10.10.350">
    <property type="match status" value="1"/>
</dbReference>
<dbReference type="Gene3D" id="3.40.50.620">
    <property type="entry name" value="HUPs"/>
    <property type="match status" value="1"/>
</dbReference>
<dbReference type="HAMAP" id="MF_00022">
    <property type="entry name" value="Glu_tRNA_synth_type1"/>
    <property type="match status" value="1"/>
</dbReference>
<dbReference type="InterPro" id="IPR045462">
    <property type="entry name" value="aa-tRNA-synth_I_cd-bd"/>
</dbReference>
<dbReference type="InterPro" id="IPR020751">
    <property type="entry name" value="aa-tRNA-synth_I_codon-bd_sub2"/>
</dbReference>
<dbReference type="InterPro" id="IPR001412">
    <property type="entry name" value="aa-tRNA-synth_I_CS"/>
</dbReference>
<dbReference type="InterPro" id="IPR008925">
    <property type="entry name" value="aa_tRNA-synth_I_cd-bd_sf"/>
</dbReference>
<dbReference type="InterPro" id="IPR004527">
    <property type="entry name" value="Glu-tRNA-ligase_bac/mito"/>
</dbReference>
<dbReference type="InterPro" id="IPR000924">
    <property type="entry name" value="Glu/Gln-tRNA-synth"/>
</dbReference>
<dbReference type="InterPro" id="IPR020058">
    <property type="entry name" value="Glu/Gln-tRNA-synth_Ib_cat-dom"/>
</dbReference>
<dbReference type="InterPro" id="IPR049940">
    <property type="entry name" value="GluQ/Sye"/>
</dbReference>
<dbReference type="InterPro" id="IPR033910">
    <property type="entry name" value="GluRS_core"/>
</dbReference>
<dbReference type="InterPro" id="IPR014729">
    <property type="entry name" value="Rossmann-like_a/b/a_fold"/>
</dbReference>
<dbReference type="NCBIfam" id="TIGR00464">
    <property type="entry name" value="gltX_bact"/>
    <property type="match status" value="1"/>
</dbReference>
<dbReference type="PANTHER" id="PTHR43311">
    <property type="entry name" value="GLUTAMATE--TRNA LIGASE"/>
    <property type="match status" value="1"/>
</dbReference>
<dbReference type="PANTHER" id="PTHR43311:SF2">
    <property type="entry name" value="GLUTAMATE--TRNA LIGASE, MITOCHONDRIAL-RELATED"/>
    <property type="match status" value="1"/>
</dbReference>
<dbReference type="Pfam" id="PF19269">
    <property type="entry name" value="Anticodon_2"/>
    <property type="match status" value="1"/>
</dbReference>
<dbReference type="Pfam" id="PF00749">
    <property type="entry name" value="tRNA-synt_1c"/>
    <property type="match status" value="1"/>
</dbReference>
<dbReference type="PRINTS" id="PR00987">
    <property type="entry name" value="TRNASYNTHGLU"/>
</dbReference>
<dbReference type="SUPFAM" id="SSF48163">
    <property type="entry name" value="An anticodon-binding domain of class I aminoacyl-tRNA synthetases"/>
    <property type="match status" value="1"/>
</dbReference>
<dbReference type="SUPFAM" id="SSF52374">
    <property type="entry name" value="Nucleotidylyl transferase"/>
    <property type="match status" value="1"/>
</dbReference>
<dbReference type="PROSITE" id="PS00178">
    <property type="entry name" value="AA_TRNA_LIGASE_I"/>
    <property type="match status" value="1"/>
</dbReference>
<evidence type="ECO:0000255" key="1">
    <source>
        <dbReference type="HAMAP-Rule" id="MF_00022"/>
    </source>
</evidence>
<keyword id="KW-0030">Aminoacyl-tRNA synthetase</keyword>
<keyword id="KW-0067">ATP-binding</keyword>
<keyword id="KW-0963">Cytoplasm</keyword>
<keyword id="KW-0436">Ligase</keyword>
<keyword id="KW-0479">Metal-binding</keyword>
<keyword id="KW-0547">Nucleotide-binding</keyword>
<keyword id="KW-0648">Protein biosynthesis</keyword>
<keyword id="KW-0862">Zinc</keyword>
<accession>B0USJ3</accession>
<reference key="1">
    <citation type="submission" date="2008-02" db="EMBL/GenBank/DDBJ databases">
        <title>Complete sequence of Haemophilus somnus 2336.</title>
        <authorList>
            <consortium name="US DOE Joint Genome Institute"/>
            <person name="Siddaramappa S."/>
            <person name="Duncan A.J."/>
            <person name="Challacombe J.F."/>
            <person name="Rainey D."/>
            <person name="Gillaspy A.F."/>
            <person name="Carson M."/>
            <person name="Gipson J."/>
            <person name="Gipson M."/>
            <person name="Bruce D."/>
            <person name="Detter J.C."/>
            <person name="Han C.S."/>
            <person name="Land M."/>
            <person name="Tapia R."/>
            <person name="Thompson L.S."/>
            <person name="Orvis J."/>
            <person name="Zaitshik J."/>
            <person name="Barnes G."/>
            <person name="Brettin T.S."/>
            <person name="Dyer D.W."/>
            <person name="Inzana T.J."/>
        </authorList>
    </citation>
    <scope>NUCLEOTIDE SEQUENCE [LARGE SCALE GENOMIC DNA]</scope>
    <source>
        <strain>2336</strain>
    </source>
</reference>
<feature type="chain" id="PRO_1000074324" description="Glutamate--tRNA ligase">
    <location>
        <begin position="1"/>
        <end position="480"/>
    </location>
</feature>
<feature type="short sequence motif" description="'HIGH' region" evidence="1">
    <location>
        <begin position="21"/>
        <end position="31"/>
    </location>
</feature>
<feature type="short sequence motif" description="'KMSKS' region" evidence="1">
    <location>
        <begin position="248"/>
        <end position="252"/>
    </location>
</feature>
<feature type="binding site" evidence="1">
    <location>
        <position position="110"/>
    </location>
    <ligand>
        <name>Zn(2+)</name>
        <dbReference type="ChEBI" id="CHEBI:29105"/>
    </ligand>
</feature>
<feature type="binding site" evidence="1">
    <location>
        <position position="112"/>
    </location>
    <ligand>
        <name>Zn(2+)</name>
        <dbReference type="ChEBI" id="CHEBI:29105"/>
    </ligand>
</feature>
<feature type="binding site" evidence="1">
    <location>
        <position position="137"/>
    </location>
    <ligand>
        <name>Zn(2+)</name>
        <dbReference type="ChEBI" id="CHEBI:29105"/>
    </ligand>
</feature>
<feature type="binding site" evidence="1">
    <location>
        <position position="139"/>
    </location>
    <ligand>
        <name>Zn(2+)</name>
        <dbReference type="ChEBI" id="CHEBI:29105"/>
    </ligand>
</feature>
<feature type="binding site" evidence="1">
    <location>
        <position position="251"/>
    </location>
    <ligand>
        <name>ATP</name>
        <dbReference type="ChEBI" id="CHEBI:30616"/>
    </ligand>
</feature>
<name>SYE_HISS2</name>
<sequence>MKLEPLFNLDPNTKVRTRFAPSPTGYLHVGGARTALYSWLYAKHNQGEFVLRIEDTDLERSTPEATAAILEGMEWLNLAWEHGPYFQTKRFERYNQVIDQMIEQGLAYRCYCTKERLEDLRHSQEQNKQKPRYDRYCLHQSEYPVDAPHVVRFKNPTEGTVVFDDAVRGRIEISNRELDDLIIRRTDGSPTYNFCVVVDDWDMGITHVVRGEDHINNTPRQINILKALGAPIPTYAHVSMINGDDGQKLSKRHGAVSVMQYRDEGYLPEALINYLVRLGWGHGDQEIFSREEMIALFDIHSVSKSASAFNTEKLQWLNQHYIRSLPVEQVATHLEWHMKKHGIDYSNGPNLAEIIPVLSERCKTLKELAISSRYFYQDVENYDEKAVAKNFKPEAIKPLAKLAEKLTALSDWTVENIHEVMSQTAQELDIGMGKVGMPFRLAVTGLGQSPSMDITAKLVGKDRTISRINNAIAFIHTQNV</sequence>
<proteinExistence type="inferred from homology"/>
<gene>
    <name evidence="1" type="primary">gltX</name>
    <name type="ordered locus">HSM_0754</name>
</gene>
<comment type="function">
    <text evidence="1">Catalyzes the attachment of glutamate to tRNA(Glu) in a two-step reaction: glutamate is first activated by ATP to form Glu-AMP and then transferred to the acceptor end of tRNA(Glu).</text>
</comment>
<comment type="catalytic activity">
    <reaction evidence="1">
        <text>tRNA(Glu) + L-glutamate + ATP = L-glutamyl-tRNA(Glu) + AMP + diphosphate</text>
        <dbReference type="Rhea" id="RHEA:23540"/>
        <dbReference type="Rhea" id="RHEA-COMP:9663"/>
        <dbReference type="Rhea" id="RHEA-COMP:9680"/>
        <dbReference type="ChEBI" id="CHEBI:29985"/>
        <dbReference type="ChEBI" id="CHEBI:30616"/>
        <dbReference type="ChEBI" id="CHEBI:33019"/>
        <dbReference type="ChEBI" id="CHEBI:78442"/>
        <dbReference type="ChEBI" id="CHEBI:78520"/>
        <dbReference type="ChEBI" id="CHEBI:456215"/>
        <dbReference type="EC" id="6.1.1.17"/>
    </reaction>
</comment>
<comment type="cofactor">
    <cofactor evidence="1">
        <name>Zn(2+)</name>
        <dbReference type="ChEBI" id="CHEBI:29105"/>
    </cofactor>
    <text evidence="1">Binds 1 zinc ion per subunit.</text>
</comment>
<comment type="subunit">
    <text evidence="1">Monomer.</text>
</comment>
<comment type="subcellular location">
    <subcellularLocation>
        <location evidence="1">Cytoplasm</location>
    </subcellularLocation>
</comment>
<comment type="similarity">
    <text evidence="1">Belongs to the class-I aminoacyl-tRNA synthetase family. Glutamate--tRNA ligase type 1 subfamily.</text>
</comment>
<protein>
    <recommendedName>
        <fullName evidence="1">Glutamate--tRNA ligase</fullName>
        <ecNumber evidence="1">6.1.1.17</ecNumber>
    </recommendedName>
    <alternativeName>
        <fullName evidence="1">Glutamyl-tRNA synthetase</fullName>
        <shortName evidence="1">GluRS</shortName>
    </alternativeName>
</protein>